<sequence>MKVAVLGAAGGIGQALALLLKTQLPSGSELSLYDIAPVTPGVAVDLSHIPTAVKIKGFSGEDATPALEGADVVLISAGVARKPGMDRSDLFNVNAGIVKNLVQQVAKNCPKACIGIITNPVNTTVAIAAEVLKKAGVYDKNKLFGVTTLDIIRSNTFVAELKGKQPGEVEVPVIGGHSGVTILPLLSQVPGVSFTEQEVADLTKRIQNAGTEVVEAKAGGGSATLSMGQAAARFGLSLVRALQGEQGVVECAYVEGDGQYARFFSQPLLLGKNGVEERKSIGTLSAFEQNALEGMLDTLKKDIALGKEFVNK</sequence>
<name>MDH_SHIFL</name>
<protein>
    <recommendedName>
        <fullName evidence="1">Malate dehydrogenase</fullName>
        <ecNumber evidence="1">1.1.1.37</ecNumber>
    </recommendedName>
</protein>
<evidence type="ECO:0000255" key="1">
    <source>
        <dbReference type="HAMAP-Rule" id="MF_01516"/>
    </source>
</evidence>
<dbReference type="EC" id="1.1.1.37" evidence="1"/>
<dbReference type="EMBL" id="AE005674">
    <property type="protein sequence ID" value="AAN44740.2"/>
    <property type="molecule type" value="Genomic_DNA"/>
</dbReference>
<dbReference type="EMBL" id="AE014073">
    <property type="protein sequence ID" value="AAP18550.1"/>
    <property type="molecule type" value="Genomic_DNA"/>
</dbReference>
<dbReference type="RefSeq" id="NP_709033.2">
    <property type="nucleotide sequence ID" value="NC_004337.2"/>
</dbReference>
<dbReference type="RefSeq" id="WP_005050705.1">
    <property type="nucleotide sequence ID" value="NZ_WPGW01000026.1"/>
</dbReference>
<dbReference type="SMR" id="Q83Q04"/>
<dbReference type="STRING" id="198214.SF3276"/>
<dbReference type="PaxDb" id="198214-SF3276"/>
<dbReference type="GeneID" id="1025382"/>
<dbReference type="KEGG" id="sfl:SF3276"/>
<dbReference type="KEGG" id="sfx:S3491"/>
<dbReference type="PATRIC" id="fig|198214.7.peg.3882"/>
<dbReference type="HOGENOM" id="CLU_047181_0_1_6"/>
<dbReference type="Proteomes" id="UP000001006">
    <property type="component" value="Chromosome"/>
</dbReference>
<dbReference type="Proteomes" id="UP000002673">
    <property type="component" value="Chromosome"/>
</dbReference>
<dbReference type="GO" id="GO:0005737">
    <property type="term" value="C:cytoplasm"/>
    <property type="evidence" value="ECO:0007669"/>
    <property type="project" value="TreeGrafter"/>
</dbReference>
<dbReference type="GO" id="GO:0030060">
    <property type="term" value="F:L-malate dehydrogenase (NAD+) activity"/>
    <property type="evidence" value="ECO:0007669"/>
    <property type="project" value="UniProtKB-UniRule"/>
</dbReference>
<dbReference type="GO" id="GO:0006108">
    <property type="term" value="P:malate metabolic process"/>
    <property type="evidence" value="ECO:0007669"/>
    <property type="project" value="InterPro"/>
</dbReference>
<dbReference type="GO" id="GO:0006099">
    <property type="term" value="P:tricarboxylic acid cycle"/>
    <property type="evidence" value="ECO:0007669"/>
    <property type="project" value="UniProtKB-UniRule"/>
</dbReference>
<dbReference type="CDD" id="cd01337">
    <property type="entry name" value="MDH_glyoxysomal_mitochondrial"/>
    <property type="match status" value="1"/>
</dbReference>
<dbReference type="FunFam" id="3.40.50.720:FF:000017">
    <property type="entry name" value="Malate dehydrogenase"/>
    <property type="match status" value="1"/>
</dbReference>
<dbReference type="FunFam" id="3.90.110.10:FF:000001">
    <property type="entry name" value="Malate dehydrogenase"/>
    <property type="match status" value="1"/>
</dbReference>
<dbReference type="Gene3D" id="3.90.110.10">
    <property type="entry name" value="Lactate dehydrogenase/glycoside hydrolase, family 4, C-terminal"/>
    <property type="match status" value="1"/>
</dbReference>
<dbReference type="Gene3D" id="3.40.50.720">
    <property type="entry name" value="NAD(P)-binding Rossmann-like Domain"/>
    <property type="match status" value="1"/>
</dbReference>
<dbReference type="HAMAP" id="MF_01516">
    <property type="entry name" value="Malate_dehydrog_1"/>
    <property type="match status" value="1"/>
</dbReference>
<dbReference type="InterPro" id="IPR001557">
    <property type="entry name" value="L-lactate/malate_DH"/>
</dbReference>
<dbReference type="InterPro" id="IPR022383">
    <property type="entry name" value="Lactate/malate_DH_C"/>
</dbReference>
<dbReference type="InterPro" id="IPR001236">
    <property type="entry name" value="Lactate/malate_DH_N"/>
</dbReference>
<dbReference type="InterPro" id="IPR015955">
    <property type="entry name" value="Lactate_DH/Glyco_Ohase_4_C"/>
</dbReference>
<dbReference type="InterPro" id="IPR001252">
    <property type="entry name" value="Malate_DH_AS"/>
</dbReference>
<dbReference type="InterPro" id="IPR010097">
    <property type="entry name" value="Malate_DH_type1"/>
</dbReference>
<dbReference type="InterPro" id="IPR023958">
    <property type="entry name" value="Malate_DH_type1_bac"/>
</dbReference>
<dbReference type="InterPro" id="IPR036291">
    <property type="entry name" value="NAD(P)-bd_dom_sf"/>
</dbReference>
<dbReference type="NCBIfam" id="TIGR01772">
    <property type="entry name" value="MDH_euk_gproteo"/>
    <property type="match status" value="1"/>
</dbReference>
<dbReference type="PANTHER" id="PTHR11540">
    <property type="entry name" value="MALATE AND LACTATE DEHYDROGENASE"/>
    <property type="match status" value="1"/>
</dbReference>
<dbReference type="PANTHER" id="PTHR11540:SF16">
    <property type="entry name" value="MALATE DEHYDROGENASE, MITOCHONDRIAL"/>
    <property type="match status" value="1"/>
</dbReference>
<dbReference type="Pfam" id="PF02866">
    <property type="entry name" value="Ldh_1_C"/>
    <property type="match status" value="1"/>
</dbReference>
<dbReference type="Pfam" id="PF00056">
    <property type="entry name" value="Ldh_1_N"/>
    <property type="match status" value="1"/>
</dbReference>
<dbReference type="PIRSF" id="PIRSF000102">
    <property type="entry name" value="Lac_mal_DH"/>
    <property type="match status" value="1"/>
</dbReference>
<dbReference type="SUPFAM" id="SSF56327">
    <property type="entry name" value="LDH C-terminal domain-like"/>
    <property type="match status" value="1"/>
</dbReference>
<dbReference type="SUPFAM" id="SSF51735">
    <property type="entry name" value="NAD(P)-binding Rossmann-fold domains"/>
    <property type="match status" value="1"/>
</dbReference>
<dbReference type="PROSITE" id="PS00068">
    <property type="entry name" value="MDH"/>
    <property type="match status" value="1"/>
</dbReference>
<reference key="1">
    <citation type="journal article" date="2002" name="Nucleic Acids Res.">
        <title>Genome sequence of Shigella flexneri 2a: insights into pathogenicity through comparison with genomes of Escherichia coli K12 and O157.</title>
        <authorList>
            <person name="Jin Q."/>
            <person name="Yuan Z."/>
            <person name="Xu J."/>
            <person name="Wang Y."/>
            <person name="Shen Y."/>
            <person name="Lu W."/>
            <person name="Wang J."/>
            <person name="Liu H."/>
            <person name="Yang J."/>
            <person name="Yang F."/>
            <person name="Zhang X."/>
            <person name="Zhang J."/>
            <person name="Yang G."/>
            <person name="Wu H."/>
            <person name="Qu D."/>
            <person name="Dong J."/>
            <person name="Sun L."/>
            <person name="Xue Y."/>
            <person name="Zhao A."/>
            <person name="Gao Y."/>
            <person name="Zhu J."/>
            <person name="Kan B."/>
            <person name="Ding K."/>
            <person name="Chen S."/>
            <person name="Cheng H."/>
            <person name="Yao Z."/>
            <person name="He B."/>
            <person name="Chen R."/>
            <person name="Ma D."/>
            <person name="Qiang B."/>
            <person name="Wen Y."/>
            <person name="Hou Y."/>
            <person name="Yu J."/>
        </authorList>
    </citation>
    <scope>NUCLEOTIDE SEQUENCE [LARGE SCALE GENOMIC DNA]</scope>
    <source>
        <strain>301 / Serotype 2a</strain>
    </source>
</reference>
<reference key="2">
    <citation type="journal article" date="2003" name="Infect. Immun.">
        <title>Complete genome sequence and comparative genomics of Shigella flexneri serotype 2a strain 2457T.</title>
        <authorList>
            <person name="Wei J."/>
            <person name="Goldberg M.B."/>
            <person name="Burland V."/>
            <person name="Venkatesan M.M."/>
            <person name="Deng W."/>
            <person name="Fournier G."/>
            <person name="Mayhew G.F."/>
            <person name="Plunkett G. III"/>
            <person name="Rose D.J."/>
            <person name="Darling A."/>
            <person name="Mau B."/>
            <person name="Perna N.T."/>
            <person name="Payne S.M."/>
            <person name="Runyen-Janecky L.J."/>
            <person name="Zhou S."/>
            <person name="Schwartz D.C."/>
            <person name="Blattner F.R."/>
        </authorList>
    </citation>
    <scope>NUCLEOTIDE SEQUENCE [LARGE SCALE GENOMIC DNA]</scope>
    <source>
        <strain>ATCC 700930 / 2457T / Serotype 2a</strain>
    </source>
</reference>
<proteinExistence type="inferred from homology"/>
<comment type="function">
    <text evidence="1">Catalyzes the reversible oxidation of malate to oxaloacetate.</text>
</comment>
<comment type="catalytic activity">
    <reaction evidence="1">
        <text>(S)-malate + NAD(+) = oxaloacetate + NADH + H(+)</text>
        <dbReference type="Rhea" id="RHEA:21432"/>
        <dbReference type="ChEBI" id="CHEBI:15378"/>
        <dbReference type="ChEBI" id="CHEBI:15589"/>
        <dbReference type="ChEBI" id="CHEBI:16452"/>
        <dbReference type="ChEBI" id="CHEBI:57540"/>
        <dbReference type="ChEBI" id="CHEBI:57945"/>
        <dbReference type="EC" id="1.1.1.37"/>
    </reaction>
</comment>
<comment type="subunit">
    <text evidence="1">Homodimer.</text>
</comment>
<comment type="similarity">
    <text evidence="1">Belongs to the LDH/MDH superfamily. MDH type 1 family.</text>
</comment>
<feature type="chain" id="PRO_0000113327" description="Malate dehydrogenase">
    <location>
        <begin position="1"/>
        <end position="312"/>
    </location>
</feature>
<feature type="active site" description="Proton acceptor" evidence="1">
    <location>
        <position position="177"/>
    </location>
</feature>
<feature type="binding site" evidence="1">
    <location>
        <begin position="7"/>
        <end position="13"/>
    </location>
    <ligand>
        <name>NAD(+)</name>
        <dbReference type="ChEBI" id="CHEBI:57540"/>
    </ligand>
</feature>
<feature type="binding site" evidence="1">
    <location>
        <position position="34"/>
    </location>
    <ligand>
        <name>NAD(+)</name>
        <dbReference type="ChEBI" id="CHEBI:57540"/>
    </ligand>
</feature>
<feature type="binding site" evidence="1">
    <location>
        <position position="81"/>
    </location>
    <ligand>
        <name>substrate</name>
    </ligand>
</feature>
<feature type="binding site" evidence="1">
    <location>
        <position position="87"/>
    </location>
    <ligand>
        <name>substrate</name>
    </ligand>
</feature>
<feature type="binding site" evidence="1">
    <location>
        <position position="94"/>
    </location>
    <ligand>
        <name>NAD(+)</name>
        <dbReference type="ChEBI" id="CHEBI:57540"/>
    </ligand>
</feature>
<feature type="binding site" evidence="1">
    <location>
        <begin position="117"/>
        <end position="119"/>
    </location>
    <ligand>
        <name>NAD(+)</name>
        <dbReference type="ChEBI" id="CHEBI:57540"/>
    </ligand>
</feature>
<feature type="binding site" evidence="1">
    <location>
        <position position="119"/>
    </location>
    <ligand>
        <name>substrate</name>
    </ligand>
</feature>
<feature type="binding site" evidence="1">
    <location>
        <position position="153"/>
    </location>
    <ligand>
        <name>substrate</name>
    </ligand>
</feature>
<feature type="binding site" evidence="1">
    <location>
        <position position="227"/>
    </location>
    <ligand>
        <name>NAD(+)</name>
        <dbReference type="ChEBI" id="CHEBI:57540"/>
    </ligand>
</feature>
<organism>
    <name type="scientific">Shigella flexneri</name>
    <dbReference type="NCBI Taxonomy" id="623"/>
    <lineage>
        <taxon>Bacteria</taxon>
        <taxon>Pseudomonadati</taxon>
        <taxon>Pseudomonadota</taxon>
        <taxon>Gammaproteobacteria</taxon>
        <taxon>Enterobacterales</taxon>
        <taxon>Enterobacteriaceae</taxon>
        <taxon>Shigella</taxon>
    </lineage>
</organism>
<accession>Q83Q04</accession>
<accession>Q7UBF0</accession>
<keyword id="KW-0520">NAD</keyword>
<keyword id="KW-0560">Oxidoreductase</keyword>
<keyword id="KW-1185">Reference proteome</keyword>
<keyword id="KW-0816">Tricarboxylic acid cycle</keyword>
<gene>
    <name evidence="1" type="primary">mdh</name>
    <name type="ordered locus">SF3276</name>
    <name type="ordered locus">S3491</name>
</gene>